<gene>
    <name evidence="1" type="primary">pyrH</name>
    <name type="ordered locus">SE_0934</name>
</gene>
<protein>
    <recommendedName>
        <fullName evidence="1">Uridylate kinase</fullName>
        <shortName evidence="1">UK</shortName>
        <ecNumber evidence="1">2.7.4.22</ecNumber>
    </recommendedName>
    <alternativeName>
        <fullName evidence="1">Uridine monophosphate kinase</fullName>
        <shortName evidence="1">UMP kinase</shortName>
        <shortName evidence="1">UMPK</shortName>
    </alternativeName>
</protein>
<accession>Q8CSU1</accession>
<feature type="chain" id="PRO_0000143887" description="Uridylate kinase">
    <location>
        <begin position="1"/>
        <end position="240"/>
    </location>
</feature>
<feature type="region of interest" description="Involved in allosteric activation by GTP" evidence="1">
    <location>
        <begin position="21"/>
        <end position="26"/>
    </location>
</feature>
<feature type="binding site" evidence="1">
    <location>
        <begin position="13"/>
        <end position="16"/>
    </location>
    <ligand>
        <name>ATP</name>
        <dbReference type="ChEBI" id="CHEBI:30616"/>
    </ligand>
</feature>
<feature type="binding site" evidence="1">
    <location>
        <position position="55"/>
    </location>
    <ligand>
        <name>UMP</name>
        <dbReference type="ChEBI" id="CHEBI:57865"/>
    </ligand>
</feature>
<feature type="binding site" evidence="1">
    <location>
        <position position="56"/>
    </location>
    <ligand>
        <name>ATP</name>
        <dbReference type="ChEBI" id="CHEBI:30616"/>
    </ligand>
</feature>
<feature type="binding site" evidence="1">
    <location>
        <position position="60"/>
    </location>
    <ligand>
        <name>ATP</name>
        <dbReference type="ChEBI" id="CHEBI:30616"/>
    </ligand>
</feature>
<feature type="binding site" evidence="1">
    <location>
        <position position="75"/>
    </location>
    <ligand>
        <name>UMP</name>
        <dbReference type="ChEBI" id="CHEBI:57865"/>
    </ligand>
</feature>
<feature type="binding site" evidence="1">
    <location>
        <begin position="136"/>
        <end position="143"/>
    </location>
    <ligand>
        <name>UMP</name>
        <dbReference type="ChEBI" id="CHEBI:57865"/>
    </ligand>
</feature>
<feature type="binding site" evidence="1">
    <location>
        <position position="164"/>
    </location>
    <ligand>
        <name>ATP</name>
        <dbReference type="ChEBI" id="CHEBI:30616"/>
    </ligand>
</feature>
<feature type="binding site" evidence="1">
    <location>
        <position position="170"/>
    </location>
    <ligand>
        <name>ATP</name>
        <dbReference type="ChEBI" id="CHEBI:30616"/>
    </ligand>
</feature>
<feature type="binding site" evidence="1">
    <location>
        <position position="173"/>
    </location>
    <ligand>
        <name>ATP</name>
        <dbReference type="ChEBI" id="CHEBI:30616"/>
    </ligand>
</feature>
<dbReference type="EC" id="2.7.4.22" evidence="1"/>
<dbReference type="EMBL" id="AE015929">
    <property type="protein sequence ID" value="AAO04531.1"/>
    <property type="molecule type" value="Genomic_DNA"/>
</dbReference>
<dbReference type="RefSeq" id="NP_764489.1">
    <property type="nucleotide sequence ID" value="NC_004461.1"/>
</dbReference>
<dbReference type="RefSeq" id="WP_002439511.1">
    <property type="nucleotide sequence ID" value="NZ_WBME01000001.1"/>
</dbReference>
<dbReference type="SMR" id="Q8CSU1"/>
<dbReference type="GeneID" id="50018930"/>
<dbReference type="KEGG" id="sep:SE_0934"/>
<dbReference type="PATRIC" id="fig|176280.10.peg.909"/>
<dbReference type="eggNOG" id="COG0528">
    <property type="taxonomic scope" value="Bacteria"/>
</dbReference>
<dbReference type="HOGENOM" id="CLU_033861_0_0_9"/>
<dbReference type="OrthoDB" id="9807458at2"/>
<dbReference type="UniPathway" id="UPA00159">
    <property type="reaction ID" value="UER00275"/>
</dbReference>
<dbReference type="Proteomes" id="UP000001411">
    <property type="component" value="Chromosome"/>
</dbReference>
<dbReference type="GO" id="GO:0005737">
    <property type="term" value="C:cytoplasm"/>
    <property type="evidence" value="ECO:0007669"/>
    <property type="project" value="UniProtKB-SubCell"/>
</dbReference>
<dbReference type="GO" id="GO:0005524">
    <property type="term" value="F:ATP binding"/>
    <property type="evidence" value="ECO:0007669"/>
    <property type="project" value="UniProtKB-KW"/>
</dbReference>
<dbReference type="GO" id="GO:0033862">
    <property type="term" value="F:UMP kinase activity"/>
    <property type="evidence" value="ECO:0007669"/>
    <property type="project" value="UniProtKB-EC"/>
</dbReference>
<dbReference type="GO" id="GO:0044210">
    <property type="term" value="P:'de novo' CTP biosynthetic process"/>
    <property type="evidence" value="ECO:0007669"/>
    <property type="project" value="UniProtKB-UniRule"/>
</dbReference>
<dbReference type="GO" id="GO:0006225">
    <property type="term" value="P:UDP biosynthetic process"/>
    <property type="evidence" value="ECO:0007669"/>
    <property type="project" value="TreeGrafter"/>
</dbReference>
<dbReference type="CDD" id="cd04254">
    <property type="entry name" value="AAK_UMPK-PyrH-Ec"/>
    <property type="match status" value="1"/>
</dbReference>
<dbReference type="FunFam" id="3.40.1160.10:FF:000001">
    <property type="entry name" value="Uridylate kinase"/>
    <property type="match status" value="1"/>
</dbReference>
<dbReference type="Gene3D" id="3.40.1160.10">
    <property type="entry name" value="Acetylglutamate kinase-like"/>
    <property type="match status" value="1"/>
</dbReference>
<dbReference type="HAMAP" id="MF_01220_B">
    <property type="entry name" value="PyrH_B"/>
    <property type="match status" value="1"/>
</dbReference>
<dbReference type="InterPro" id="IPR036393">
    <property type="entry name" value="AceGlu_kinase-like_sf"/>
</dbReference>
<dbReference type="InterPro" id="IPR001048">
    <property type="entry name" value="Asp/Glu/Uridylate_kinase"/>
</dbReference>
<dbReference type="InterPro" id="IPR011817">
    <property type="entry name" value="Uridylate_kinase"/>
</dbReference>
<dbReference type="InterPro" id="IPR015963">
    <property type="entry name" value="Uridylate_kinase_bac"/>
</dbReference>
<dbReference type="NCBIfam" id="TIGR02075">
    <property type="entry name" value="pyrH_bact"/>
    <property type="match status" value="1"/>
</dbReference>
<dbReference type="PANTHER" id="PTHR42833">
    <property type="entry name" value="URIDYLATE KINASE"/>
    <property type="match status" value="1"/>
</dbReference>
<dbReference type="PANTHER" id="PTHR42833:SF4">
    <property type="entry name" value="URIDYLATE KINASE PUMPKIN, CHLOROPLASTIC"/>
    <property type="match status" value="1"/>
</dbReference>
<dbReference type="Pfam" id="PF00696">
    <property type="entry name" value="AA_kinase"/>
    <property type="match status" value="1"/>
</dbReference>
<dbReference type="PIRSF" id="PIRSF005650">
    <property type="entry name" value="Uridylate_kin"/>
    <property type="match status" value="1"/>
</dbReference>
<dbReference type="SUPFAM" id="SSF53633">
    <property type="entry name" value="Carbamate kinase-like"/>
    <property type="match status" value="1"/>
</dbReference>
<keyword id="KW-0021">Allosteric enzyme</keyword>
<keyword id="KW-0067">ATP-binding</keyword>
<keyword id="KW-0963">Cytoplasm</keyword>
<keyword id="KW-0418">Kinase</keyword>
<keyword id="KW-0547">Nucleotide-binding</keyword>
<keyword id="KW-0665">Pyrimidine biosynthesis</keyword>
<keyword id="KW-0808">Transferase</keyword>
<reference key="1">
    <citation type="journal article" date="2003" name="Mol. Microbiol.">
        <title>Genome-based analysis of virulence genes in a non-biofilm-forming Staphylococcus epidermidis strain (ATCC 12228).</title>
        <authorList>
            <person name="Zhang Y.-Q."/>
            <person name="Ren S.-X."/>
            <person name="Li H.-L."/>
            <person name="Wang Y.-X."/>
            <person name="Fu G."/>
            <person name="Yang J."/>
            <person name="Qin Z.-Q."/>
            <person name="Miao Y.-G."/>
            <person name="Wang W.-Y."/>
            <person name="Chen R.-S."/>
            <person name="Shen Y."/>
            <person name="Chen Z."/>
            <person name="Yuan Z.-H."/>
            <person name="Zhao G.-P."/>
            <person name="Qu D."/>
            <person name="Danchin A."/>
            <person name="Wen Y.-M."/>
        </authorList>
    </citation>
    <scope>NUCLEOTIDE SEQUENCE [LARGE SCALE GENOMIC DNA]</scope>
    <source>
        <strain>ATCC 12228 / FDA PCI 1200</strain>
    </source>
</reference>
<sequence length="240" mass="26102">MAQTSKYKRVVLKLSGEALAGDKGFGINPIIIKSVAQQVAEVAKMDCEIAVIVGGGNIWRGKTGSDLGMDRGTADYMGMLATVMNALALQDSLEQLDCDTRVLTSIEMKQVAEPYIRRRAIRHLEKKRVVIFAAGIGNPYFSTDTTAALRAAEVEADVILMGKNNVDGVYSADPKVDANAIKYEHLTHIQMLQEGLQVMDSTASSFCMDNNIPLNVFSIMEEGNIKRAVMGEKIGTLITK</sequence>
<evidence type="ECO:0000255" key="1">
    <source>
        <dbReference type="HAMAP-Rule" id="MF_01220"/>
    </source>
</evidence>
<name>PYRH_STAES</name>
<organism>
    <name type="scientific">Staphylococcus epidermidis (strain ATCC 12228 / FDA PCI 1200)</name>
    <dbReference type="NCBI Taxonomy" id="176280"/>
    <lineage>
        <taxon>Bacteria</taxon>
        <taxon>Bacillati</taxon>
        <taxon>Bacillota</taxon>
        <taxon>Bacilli</taxon>
        <taxon>Bacillales</taxon>
        <taxon>Staphylococcaceae</taxon>
        <taxon>Staphylococcus</taxon>
    </lineage>
</organism>
<proteinExistence type="inferred from homology"/>
<comment type="function">
    <text evidence="1">Catalyzes the reversible phosphorylation of UMP to UDP.</text>
</comment>
<comment type="catalytic activity">
    <reaction evidence="1">
        <text>UMP + ATP = UDP + ADP</text>
        <dbReference type="Rhea" id="RHEA:24400"/>
        <dbReference type="ChEBI" id="CHEBI:30616"/>
        <dbReference type="ChEBI" id="CHEBI:57865"/>
        <dbReference type="ChEBI" id="CHEBI:58223"/>
        <dbReference type="ChEBI" id="CHEBI:456216"/>
        <dbReference type="EC" id="2.7.4.22"/>
    </reaction>
</comment>
<comment type="activity regulation">
    <text evidence="1">Allosterically activated by GTP. Inhibited by UTP.</text>
</comment>
<comment type="pathway">
    <text evidence="1">Pyrimidine metabolism; CTP biosynthesis via de novo pathway; UDP from UMP (UMPK route): step 1/1.</text>
</comment>
<comment type="subunit">
    <text evidence="1">Homohexamer.</text>
</comment>
<comment type="subcellular location">
    <subcellularLocation>
        <location evidence="1">Cytoplasm</location>
    </subcellularLocation>
</comment>
<comment type="similarity">
    <text evidence="1">Belongs to the UMP kinase family.</text>
</comment>